<reference evidence="6" key="1">
    <citation type="journal article" date="2007" name="Nature">
        <title>Evolution of genes and genomes on the Drosophila phylogeny.</title>
        <authorList>
            <consortium name="Drosophila 12 genomes consortium"/>
        </authorList>
    </citation>
    <scope>NUCLEOTIDE SEQUENCE [LARGE SCALE GENOMIC DNA]</scope>
    <source>
        <strain evidence="6">Tucson 14030-0811.24</strain>
    </source>
</reference>
<accession>B4N9D3</accession>
<gene>
    <name evidence="2" type="primary">WRNexo</name>
    <name type="ORF">GK11496</name>
</gene>
<sequence>MDKYLIKMPTKTNLNGDQKPAALKGTPKTIDKQKEKNTPTEKQKQEDDYVEKENTPKLRNAQIAKPASKRKNQDTPTEVKDIKNEEDGENPPKRRSARLTRSTRSMAEEGTPSPEKEKPEKLPFIKYKGAIKYYTENHEIAASADDVIQWIDKQTTLDVVPMAFDMEWPFSFQTGPGKSSVIQVCVDERCCYVYQLSKLKKLPAALVALLNHPKVRLHGVNIKADFRKLQRDFPEVSADPLIEKCVDLGVWCNEICETGGRWSLERLANFIAKKAMDKSKKVRMSKWHVIPLDENQLMYAAIDVYIGQVIYRDLEQREKVKLQNEANFKEQNGDAAFKAVKALGETFLDKITQVTI</sequence>
<feature type="chain" id="PRO_0000399383" description="3'-5' exonuclease">
    <location>
        <begin position="1"/>
        <end position="356"/>
    </location>
</feature>
<feature type="domain" description="3'-5' exonuclease" evidence="3">
    <location>
        <begin position="155"/>
        <end position="316"/>
    </location>
</feature>
<feature type="region of interest" description="Disordered" evidence="4">
    <location>
        <begin position="1"/>
        <end position="120"/>
    </location>
</feature>
<feature type="compositionally biased region" description="Basic and acidic residues" evidence="4">
    <location>
        <begin position="29"/>
        <end position="56"/>
    </location>
</feature>
<feature type="compositionally biased region" description="Basic and acidic residues" evidence="4">
    <location>
        <begin position="71"/>
        <end position="85"/>
    </location>
</feature>
<feature type="compositionally biased region" description="Low complexity" evidence="4">
    <location>
        <begin position="99"/>
        <end position="113"/>
    </location>
</feature>
<feature type="binding site" evidence="2">
    <location>
        <position position="165"/>
    </location>
    <ligand>
        <name>Mg(2+)</name>
        <dbReference type="ChEBI" id="CHEBI:18420"/>
        <label>1</label>
        <note>catalytic</note>
    </ligand>
</feature>
<feature type="binding site" evidence="2">
    <location>
        <position position="165"/>
    </location>
    <ligand>
        <name>Mg(2+)</name>
        <dbReference type="ChEBI" id="CHEBI:18420"/>
        <label>2</label>
        <note>catalytic</note>
    </ligand>
</feature>
<feature type="binding site" evidence="2">
    <location>
        <position position="167"/>
    </location>
    <ligand>
        <name>Mg(2+)</name>
        <dbReference type="ChEBI" id="CHEBI:18420"/>
        <label>1</label>
        <note>catalytic</note>
    </ligand>
</feature>
<feature type="binding site" evidence="1">
    <location>
        <position position="303"/>
    </location>
    <ligand>
        <name>Mg(2+)</name>
        <dbReference type="ChEBI" id="CHEBI:18420"/>
        <label>1</label>
        <note>catalytic</note>
    </ligand>
</feature>
<feature type="modified residue" description="Phosphoserine" evidence="2">
    <location>
        <position position="105"/>
    </location>
</feature>
<feature type="modified residue" description="Phosphoserine" evidence="2">
    <location>
        <position position="113"/>
    </location>
</feature>
<comment type="function">
    <text evidence="2">Has exonuclease activity on both single-stranded and duplex templates bearing overhangs, but not blunt ended duplex DNA, and cleaves in a 3'-5' direction. Essential for the formation of DNA replication focal centers. Has an important role in maintaining genome stability.</text>
</comment>
<comment type="subcellular location">
    <subcellularLocation>
        <location evidence="2">Nucleus</location>
    </subcellularLocation>
</comment>
<comment type="similarity">
    <text evidence="5">Belongs to the WRNexo family.</text>
</comment>
<comment type="sequence caution" evidence="5">
    <conflict type="erroneous initiation">
        <sequence resource="EMBL-CDS" id="EDW80566"/>
    </conflict>
    <text>Truncated N-terminus.</text>
</comment>
<organism>
    <name type="scientific">Drosophila willistoni</name>
    <name type="common">Fruit fly</name>
    <dbReference type="NCBI Taxonomy" id="7260"/>
    <lineage>
        <taxon>Eukaryota</taxon>
        <taxon>Metazoa</taxon>
        <taxon>Ecdysozoa</taxon>
        <taxon>Arthropoda</taxon>
        <taxon>Hexapoda</taxon>
        <taxon>Insecta</taxon>
        <taxon>Pterygota</taxon>
        <taxon>Neoptera</taxon>
        <taxon>Endopterygota</taxon>
        <taxon>Diptera</taxon>
        <taxon>Brachycera</taxon>
        <taxon>Muscomorpha</taxon>
        <taxon>Ephydroidea</taxon>
        <taxon>Drosophilidae</taxon>
        <taxon>Drosophila</taxon>
        <taxon>Sophophora</taxon>
    </lineage>
</organism>
<evidence type="ECO:0000250" key="1">
    <source>
        <dbReference type="UniProtKB" id="Q14191"/>
    </source>
</evidence>
<evidence type="ECO:0000250" key="2">
    <source>
        <dbReference type="UniProtKB" id="Q9VE86"/>
    </source>
</evidence>
<evidence type="ECO:0000255" key="3"/>
<evidence type="ECO:0000256" key="4">
    <source>
        <dbReference type="SAM" id="MobiDB-lite"/>
    </source>
</evidence>
<evidence type="ECO:0000305" key="5"/>
<evidence type="ECO:0000312" key="6">
    <source>
        <dbReference type="EMBL" id="EDW80566.1"/>
    </source>
</evidence>
<dbReference type="EC" id="3.1.11.-"/>
<dbReference type="EMBL" id="CH964232">
    <property type="protein sequence ID" value="EDW80566.1"/>
    <property type="status" value="ALT_INIT"/>
    <property type="molecule type" value="Genomic_DNA"/>
</dbReference>
<dbReference type="RefSeq" id="XP_002069580.1">
    <property type="nucleotide sequence ID" value="XM_002069544.1"/>
</dbReference>
<dbReference type="SMR" id="B4N9D3"/>
<dbReference type="STRING" id="7260.B4N9D3"/>
<dbReference type="EnsemblMetazoa" id="FBtr0242147">
    <property type="protein sequence ID" value="FBpp0240639"/>
    <property type="gene ID" value="FBgn0213507"/>
</dbReference>
<dbReference type="EnsemblMetazoa" id="XM_002069544.3">
    <property type="protein sequence ID" value="XP_002069580.2"/>
    <property type="gene ID" value="LOC6648207"/>
</dbReference>
<dbReference type="GeneID" id="6648207"/>
<dbReference type="KEGG" id="dwi:6648207"/>
<dbReference type="eggNOG" id="KOG4373">
    <property type="taxonomic scope" value="Eukaryota"/>
</dbReference>
<dbReference type="OrthoDB" id="10261556at2759"/>
<dbReference type="ChiTaRS" id="WRNexo">
    <property type="organism name" value="fly"/>
</dbReference>
<dbReference type="Proteomes" id="UP000007798">
    <property type="component" value="Unassembled WGS sequence"/>
</dbReference>
<dbReference type="GO" id="GO:0005634">
    <property type="term" value="C:nucleus"/>
    <property type="evidence" value="ECO:0000250"/>
    <property type="project" value="UniProtKB"/>
</dbReference>
<dbReference type="GO" id="GO:0008408">
    <property type="term" value="F:3'-5' exonuclease activity"/>
    <property type="evidence" value="ECO:0000250"/>
    <property type="project" value="UniProtKB"/>
</dbReference>
<dbReference type="GO" id="GO:0046872">
    <property type="term" value="F:metal ion binding"/>
    <property type="evidence" value="ECO:0007669"/>
    <property type="project" value="UniProtKB-KW"/>
</dbReference>
<dbReference type="GO" id="GO:0003676">
    <property type="term" value="F:nucleic acid binding"/>
    <property type="evidence" value="ECO:0007669"/>
    <property type="project" value="InterPro"/>
</dbReference>
<dbReference type="GO" id="GO:0045950">
    <property type="term" value="P:negative regulation of mitotic recombination"/>
    <property type="evidence" value="ECO:0000250"/>
    <property type="project" value="UniProtKB"/>
</dbReference>
<dbReference type="GO" id="GO:0006139">
    <property type="term" value="P:nucleobase-containing compound metabolic process"/>
    <property type="evidence" value="ECO:0007669"/>
    <property type="project" value="InterPro"/>
</dbReference>
<dbReference type="CDD" id="cd06141">
    <property type="entry name" value="WRN_exo"/>
    <property type="match status" value="1"/>
</dbReference>
<dbReference type="FunFam" id="3.30.420.10:FF:000104">
    <property type="entry name" value="Werner Syndrome-like exonuclease"/>
    <property type="match status" value="1"/>
</dbReference>
<dbReference type="Gene3D" id="3.30.420.10">
    <property type="entry name" value="Ribonuclease H-like superfamily/Ribonuclease H"/>
    <property type="match status" value="1"/>
</dbReference>
<dbReference type="InterPro" id="IPR002562">
    <property type="entry name" value="3'-5'_exonuclease_dom"/>
</dbReference>
<dbReference type="InterPro" id="IPR051132">
    <property type="entry name" value="3-5_Exonuclease_domain"/>
</dbReference>
<dbReference type="InterPro" id="IPR012337">
    <property type="entry name" value="RNaseH-like_sf"/>
</dbReference>
<dbReference type="InterPro" id="IPR036397">
    <property type="entry name" value="RNaseH_sf"/>
</dbReference>
<dbReference type="PANTHER" id="PTHR13620:SF109">
    <property type="entry name" value="3'-5' EXONUCLEASE"/>
    <property type="match status" value="1"/>
</dbReference>
<dbReference type="PANTHER" id="PTHR13620">
    <property type="entry name" value="3-5 EXONUCLEASE"/>
    <property type="match status" value="1"/>
</dbReference>
<dbReference type="Pfam" id="PF01612">
    <property type="entry name" value="DNA_pol_A_exo1"/>
    <property type="match status" value="1"/>
</dbReference>
<dbReference type="SMART" id="SM00474">
    <property type="entry name" value="35EXOc"/>
    <property type="match status" value="1"/>
</dbReference>
<dbReference type="SUPFAM" id="SSF53098">
    <property type="entry name" value="Ribonuclease H-like"/>
    <property type="match status" value="1"/>
</dbReference>
<protein>
    <recommendedName>
        <fullName evidence="2">3'-5' exonuclease</fullName>
        <ecNumber>3.1.11.-</ecNumber>
    </recommendedName>
    <alternativeName>
        <fullName>Werner Syndrome-like exonuclease</fullName>
    </alternativeName>
</protein>
<keyword id="KW-0269">Exonuclease</keyword>
<keyword id="KW-0378">Hydrolase</keyword>
<keyword id="KW-0460">Magnesium</keyword>
<keyword id="KW-0479">Metal-binding</keyword>
<keyword id="KW-0540">Nuclease</keyword>
<keyword id="KW-0539">Nucleus</keyword>
<keyword id="KW-0597">Phosphoprotein</keyword>
<keyword id="KW-1185">Reference proteome</keyword>
<name>WRNXO_DROWI</name>
<proteinExistence type="inferred from homology"/>